<protein>
    <recommendedName>
        <fullName evidence="1">Ribosomal protein uS12 methylthiotransferase RimO</fullName>
        <shortName evidence="1">uS12 MTTase</shortName>
        <shortName evidence="1">uS12 methylthiotransferase</shortName>
        <ecNumber evidence="1">2.8.4.4</ecNumber>
    </recommendedName>
    <alternativeName>
        <fullName evidence="1">Ribosomal protein uS12 (aspartate-C(3))-methylthiotransferase</fullName>
    </alternativeName>
    <alternativeName>
        <fullName evidence="1">Ribosome maturation factor RimO</fullName>
    </alternativeName>
</protein>
<gene>
    <name evidence="1" type="primary">rimO</name>
    <name type="ordered locus">Pro_0121</name>
</gene>
<dbReference type="EC" id="2.8.4.4" evidence="1"/>
<dbReference type="EMBL" id="AE017126">
    <property type="protein sequence ID" value="AAP99167.1"/>
    <property type="molecule type" value="Genomic_DNA"/>
</dbReference>
<dbReference type="RefSeq" id="NP_874515.1">
    <property type="nucleotide sequence ID" value="NC_005042.1"/>
</dbReference>
<dbReference type="SMR" id="Q7VE92"/>
<dbReference type="STRING" id="167539.Pro_0121"/>
<dbReference type="EnsemblBacteria" id="AAP99167">
    <property type="protein sequence ID" value="AAP99167"/>
    <property type="gene ID" value="Pro_0121"/>
</dbReference>
<dbReference type="KEGG" id="pma:Pro_0121"/>
<dbReference type="PATRIC" id="fig|167539.5.peg.127"/>
<dbReference type="eggNOG" id="COG0621">
    <property type="taxonomic scope" value="Bacteria"/>
</dbReference>
<dbReference type="HOGENOM" id="CLU_018697_0_1_3"/>
<dbReference type="OrthoDB" id="9805215at2"/>
<dbReference type="Proteomes" id="UP000001420">
    <property type="component" value="Chromosome"/>
</dbReference>
<dbReference type="GO" id="GO:0005829">
    <property type="term" value="C:cytosol"/>
    <property type="evidence" value="ECO:0007669"/>
    <property type="project" value="TreeGrafter"/>
</dbReference>
<dbReference type="GO" id="GO:0051539">
    <property type="term" value="F:4 iron, 4 sulfur cluster binding"/>
    <property type="evidence" value="ECO:0007669"/>
    <property type="project" value="UniProtKB-UniRule"/>
</dbReference>
<dbReference type="GO" id="GO:0035599">
    <property type="term" value="F:aspartic acid methylthiotransferase activity"/>
    <property type="evidence" value="ECO:0007669"/>
    <property type="project" value="TreeGrafter"/>
</dbReference>
<dbReference type="GO" id="GO:0046872">
    <property type="term" value="F:metal ion binding"/>
    <property type="evidence" value="ECO:0007669"/>
    <property type="project" value="UniProtKB-KW"/>
</dbReference>
<dbReference type="GO" id="GO:0103039">
    <property type="term" value="F:protein methylthiotransferase activity"/>
    <property type="evidence" value="ECO:0007669"/>
    <property type="project" value="UniProtKB-EC"/>
</dbReference>
<dbReference type="GO" id="GO:0006400">
    <property type="term" value="P:tRNA modification"/>
    <property type="evidence" value="ECO:0007669"/>
    <property type="project" value="InterPro"/>
</dbReference>
<dbReference type="CDD" id="cd01335">
    <property type="entry name" value="Radical_SAM"/>
    <property type="match status" value="1"/>
</dbReference>
<dbReference type="FunFam" id="3.80.30.20:FF:000001">
    <property type="entry name" value="tRNA-2-methylthio-N(6)-dimethylallyladenosine synthase 2"/>
    <property type="match status" value="1"/>
</dbReference>
<dbReference type="Gene3D" id="3.40.50.12160">
    <property type="entry name" value="Methylthiotransferase, N-terminal domain"/>
    <property type="match status" value="1"/>
</dbReference>
<dbReference type="Gene3D" id="2.40.50.140">
    <property type="entry name" value="Nucleic acid-binding proteins"/>
    <property type="match status" value="1"/>
</dbReference>
<dbReference type="Gene3D" id="3.80.30.20">
    <property type="entry name" value="tm_1862 like domain"/>
    <property type="match status" value="1"/>
</dbReference>
<dbReference type="HAMAP" id="MF_01865">
    <property type="entry name" value="MTTase_RimO"/>
    <property type="match status" value="1"/>
</dbReference>
<dbReference type="InterPro" id="IPR006638">
    <property type="entry name" value="Elp3/MiaA/NifB-like_rSAM"/>
</dbReference>
<dbReference type="InterPro" id="IPR005839">
    <property type="entry name" value="Methylthiotransferase"/>
</dbReference>
<dbReference type="InterPro" id="IPR020612">
    <property type="entry name" value="Methylthiotransferase_CS"/>
</dbReference>
<dbReference type="InterPro" id="IPR013848">
    <property type="entry name" value="Methylthiotransferase_N"/>
</dbReference>
<dbReference type="InterPro" id="IPR038135">
    <property type="entry name" value="Methylthiotransferase_N_sf"/>
</dbReference>
<dbReference type="InterPro" id="IPR012340">
    <property type="entry name" value="NA-bd_OB-fold"/>
</dbReference>
<dbReference type="InterPro" id="IPR005840">
    <property type="entry name" value="Ribosomal_uS12_MeSTrfase_RimO"/>
</dbReference>
<dbReference type="InterPro" id="IPR007197">
    <property type="entry name" value="rSAM"/>
</dbReference>
<dbReference type="InterPro" id="IPR023404">
    <property type="entry name" value="rSAM_horseshoe"/>
</dbReference>
<dbReference type="InterPro" id="IPR002792">
    <property type="entry name" value="TRAM_dom"/>
</dbReference>
<dbReference type="NCBIfam" id="TIGR01125">
    <property type="entry name" value="30S ribosomal protein S12 methylthiotransferase RimO"/>
    <property type="match status" value="1"/>
</dbReference>
<dbReference type="NCBIfam" id="TIGR00089">
    <property type="entry name" value="MiaB/RimO family radical SAM methylthiotransferase"/>
    <property type="match status" value="1"/>
</dbReference>
<dbReference type="PANTHER" id="PTHR43837">
    <property type="entry name" value="RIBOSOMAL PROTEIN S12 METHYLTHIOTRANSFERASE RIMO"/>
    <property type="match status" value="1"/>
</dbReference>
<dbReference type="PANTHER" id="PTHR43837:SF1">
    <property type="entry name" value="RIBOSOMAL PROTEIN US12 METHYLTHIOTRANSFERASE RIMO"/>
    <property type="match status" value="1"/>
</dbReference>
<dbReference type="Pfam" id="PF04055">
    <property type="entry name" value="Radical_SAM"/>
    <property type="match status" value="1"/>
</dbReference>
<dbReference type="Pfam" id="PF18693">
    <property type="entry name" value="TRAM_2"/>
    <property type="match status" value="1"/>
</dbReference>
<dbReference type="Pfam" id="PF00919">
    <property type="entry name" value="UPF0004"/>
    <property type="match status" value="1"/>
</dbReference>
<dbReference type="SFLD" id="SFLDG01082">
    <property type="entry name" value="B12-binding_domain_containing"/>
    <property type="match status" value="1"/>
</dbReference>
<dbReference type="SFLD" id="SFLDS00029">
    <property type="entry name" value="Radical_SAM"/>
    <property type="match status" value="1"/>
</dbReference>
<dbReference type="SFLD" id="SFLDF00274">
    <property type="entry name" value="ribosomal_protein_S12_methylth"/>
    <property type="match status" value="1"/>
</dbReference>
<dbReference type="SMART" id="SM00729">
    <property type="entry name" value="Elp3"/>
    <property type="match status" value="1"/>
</dbReference>
<dbReference type="SUPFAM" id="SSF102114">
    <property type="entry name" value="Radical SAM enzymes"/>
    <property type="match status" value="1"/>
</dbReference>
<dbReference type="PROSITE" id="PS51449">
    <property type="entry name" value="MTTASE_N"/>
    <property type="match status" value="1"/>
</dbReference>
<dbReference type="PROSITE" id="PS01278">
    <property type="entry name" value="MTTASE_RADICAL"/>
    <property type="match status" value="1"/>
</dbReference>
<dbReference type="PROSITE" id="PS51918">
    <property type="entry name" value="RADICAL_SAM"/>
    <property type="match status" value="1"/>
</dbReference>
<reference key="1">
    <citation type="journal article" date="2003" name="Proc. Natl. Acad. Sci. U.S.A.">
        <title>Genome sequence of the cyanobacterium Prochlorococcus marinus SS120, a nearly minimal oxyphototrophic genome.</title>
        <authorList>
            <person name="Dufresne A."/>
            <person name="Salanoubat M."/>
            <person name="Partensky F."/>
            <person name="Artiguenave F."/>
            <person name="Axmann I.M."/>
            <person name="Barbe V."/>
            <person name="Duprat S."/>
            <person name="Galperin M.Y."/>
            <person name="Koonin E.V."/>
            <person name="Le Gall F."/>
            <person name="Makarova K.S."/>
            <person name="Ostrowski M."/>
            <person name="Oztas S."/>
            <person name="Robert C."/>
            <person name="Rogozin I.B."/>
            <person name="Scanlan D.J."/>
            <person name="Tandeau de Marsac N."/>
            <person name="Weissenbach J."/>
            <person name="Wincker P."/>
            <person name="Wolf Y.I."/>
            <person name="Hess W.R."/>
        </authorList>
    </citation>
    <scope>NUCLEOTIDE SEQUENCE [LARGE SCALE GENOMIC DNA]</scope>
    <source>
        <strain>SARG / CCMP1375 / SS120</strain>
    </source>
</reference>
<keyword id="KW-0004">4Fe-4S</keyword>
<keyword id="KW-0963">Cytoplasm</keyword>
<keyword id="KW-0408">Iron</keyword>
<keyword id="KW-0411">Iron-sulfur</keyword>
<keyword id="KW-0479">Metal-binding</keyword>
<keyword id="KW-1185">Reference proteome</keyword>
<keyword id="KW-0949">S-adenosyl-L-methionine</keyword>
<keyword id="KW-0808">Transferase</keyword>
<comment type="function">
    <text evidence="1">Catalyzes the methylthiolation of an aspartic acid residue of ribosomal protein uS12.</text>
</comment>
<comment type="catalytic activity">
    <reaction evidence="1">
        <text>L-aspartate(89)-[ribosomal protein uS12]-hydrogen + (sulfur carrier)-SH + AH2 + 2 S-adenosyl-L-methionine = 3-methylsulfanyl-L-aspartate(89)-[ribosomal protein uS12]-hydrogen + (sulfur carrier)-H + 5'-deoxyadenosine + L-methionine + A + S-adenosyl-L-homocysteine + 2 H(+)</text>
        <dbReference type="Rhea" id="RHEA:37087"/>
        <dbReference type="Rhea" id="RHEA-COMP:10460"/>
        <dbReference type="Rhea" id="RHEA-COMP:10461"/>
        <dbReference type="Rhea" id="RHEA-COMP:14737"/>
        <dbReference type="Rhea" id="RHEA-COMP:14739"/>
        <dbReference type="ChEBI" id="CHEBI:13193"/>
        <dbReference type="ChEBI" id="CHEBI:15378"/>
        <dbReference type="ChEBI" id="CHEBI:17319"/>
        <dbReference type="ChEBI" id="CHEBI:17499"/>
        <dbReference type="ChEBI" id="CHEBI:29917"/>
        <dbReference type="ChEBI" id="CHEBI:29961"/>
        <dbReference type="ChEBI" id="CHEBI:57844"/>
        <dbReference type="ChEBI" id="CHEBI:57856"/>
        <dbReference type="ChEBI" id="CHEBI:59789"/>
        <dbReference type="ChEBI" id="CHEBI:64428"/>
        <dbReference type="ChEBI" id="CHEBI:73599"/>
        <dbReference type="EC" id="2.8.4.4"/>
    </reaction>
</comment>
<comment type="cofactor">
    <cofactor evidence="1">
        <name>[4Fe-4S] cluster</name>
        <dbReference type="ChEBI" id="CHEBI:49883"/>
    </cofactor>
    <text evidence="1">Binds 2 [4Fe-4S] clusters. One cluster is coordinated with 3 cysteines and an exchangeable S-adenosyl-L-methionine.</text>
</comment>
<comment type="subcellular location">
    <subcellularLocation>
        <location evidence="1">Cytoplasm</location>
    </subcellularLocation>
</comment>
<comment type="similarity">
    <text evidence="1">Belongs to the methylthiotransferase family. RimO subfamily.</text>
</comment>
<name>RIMO_PROMA</name>
<proteinExistence type="inferred from homology"/>
<organism>
    <name type="scientific">Prochlorococcus marinus (strain SARG / CCMP1375 / SS120)</name>
    <dbReference type="NCBI Taxonomy" id="167539"/>
    <lineage>
        <taxon>Bacteria</taxon>
        <taxon>Bacillati</taxon>
        <taxon>Cyanobacteriota</taxon>
        <taxon>Cyanophyceae</taxon>
        <taxon>Synechococcales</taxon>
        <taxon>Prochlorococcaceae</taxon>
        <taxon>Prochlorococcus</taxon>
    </lineage>
</organism>
<evidence type="ECO:0000255" key="1">
    <source>
        <dbReference type="HAMAP-Rule" id="MF_01865"/>
    </source>
</evidence>
<evidence type="ECO:0000255" key="2">
    <source>
        <dbReference type="PROSITE-ProRule" id="PRU01266"/>
    </source>
</evidence>
<feature type="chain" id="PRO_0000374925" description="Ribosomal protein uS12 methylthiotransferase RimO">
    <location>
        <begin position="1"/>
        <end position="434"/>
    </location>
</feature>
<feature type="domain" description="MTTase N-terminal" evidence="1">
    <location>
        <begin position="1"/>
        <end position="107"/>
    </location>
</feature>
<feature type="domain" description="Radical SAM core" evidence="2">
    <location>
        <begin position="131"/>
        <end position="360"/>
    </location>
</feature>
<feature type="domain" description="TRAM" evidence="1">
    <location>
        <begin position="363"/>
        <end position="434"/>
    </location>
</feature>
<feature type="binding site" evidence="1">
    <location>
        <position position="5"/>
    </location>
    <ligand>
        <name>[4Fe-4S] cluster</name>
        <dbReference type="ChEBI" id="CHEBI:49883"/>
        <label>1</label>
    </ligand>
</feature>
<feature type="binding site" evidence="1">
    <location>
        <position position="41"/>
    </location>
    <ligand>
        <name>[4Fe-4S] cluster</name>
        <dbReference type="ChEBI" id="CHEBI:49883"/>
        <label>1</label>
    </ligand>
</feature>
<feature type="binding site" evidence="1">
    <location>
        <position position="70"/>
    </location>
    <ligand>
        <name>[4Fe-4S] cluster</name>
        <dbReference type="ChEBI" id="CHEBI:49883"/>
        <label>1</label>
    </ligand>
</feature>
<feature type="binding site" evidence="1">
    <location>
        <position position="145"/>
    </location>
    <ligand>
        <name>[4Fe-4S] cluster</name>
        <dbReference type="ChEBI" id="CHEBI:49883"/>
        <label>2</label>
        <note>4Fe-4S-S-AdoMet</note>
    </ligand>
</feature>
<feature type="binding site" evidence="1">
    <location>
        <position position="149"/>
    </location>
    <ligand>
        <name>[4Fe-4S] cluster</name>
        <dbReference type="ChEBI" id="CHEBI:49883"/>
        <label>2</label>
        <note>4Fe-4S-S-AdoMet</note>
    </ligand>
</feature>
<feature type="binding site" evidence="1">
    <location>
        <position position="152"/>
    </location>
    <ligand>
        <name>[4Fe-4S] cluster</name>
        <dbReference type="ChEBI" id="CHEBI:49883"/>
        <label>2</label>
        <note>4Fe-4S-S-AdoMet</note>
    </ligand>
</feature>
<accession>Q7VE92</accession>
<sequence length="434" mass="48385">MHLGCEKNLVDTEHMMGLLDQGGYSISTNPSEASLVVVNTCSFIQDAREESVRVLVGLAEQDKEIIIAGCLAQHFQEELLQSIPEAKAIIGTGDYQNILNVLQRIEQGEIVNQVSNNPTFVGDEKLPRFRTTGKAVAYLKIAEGCDYSCAFCIIPKLRGMQRSRSIESIVAEANQLAKQGVKELILISQITTNYGLDLYGRPCLADLLRELGDVEIPWIRVHYAYPTGLTSEVIKAFREVPNLLPYLDLPLQHSHPDVLRLMNRPWQLDLNASLLDRIRSELPDAIFRTSLIVGFPGETEEHFNHLVSFVQTQQFDHIGVFTFSSEAGTKAASLANQIPFSVAEARKDKIISIQQPIAELKNQNWIGRTVDVLIEREDKDSAEFVGRCARFSPEVDGFVRLQINNTFTNQLNIGMMTPALITGADLYDLTGQVV</sequence>